<comment type="function">
    <text evidence="1 9">Self-incompatibility (SI) is the inherited ability of a flowering plant to prevent self-fertilization by discriminating between self and non-self pollen during pollination. In many species of the Solanaceae, self-incompatibility is controlled by the single, multiallelic locus S (By similarity).</text>
</comment>
<comment type="catalytic activity">
    <reaction evidence="2 7">
        <text>a ribonucleotidyl-ribonucleotide-RNA + H2O = a 3'-end 3'-phospho-ribonucleotide-RNA + a 5'-end dephospho-ribonucleoside-RNA + H(+)</text>
        <dbReference type="Rhea" id="RHEA:68052"/>
        <dbReference type="Rhea" id="RHEA-COMP:10463"/>
        <dbReference type="Rhea" id="RHEA-COMP:13936"/>
        <dbReference type="Rhea" id="RHEA-COMP:17355"/>
        <dbReference type="ChEBI" id="CHEBI:15377"/>
        <dbReference type="ChEBI" id="CHEBI:15378"/>
        <dbReference type="ChEBI" id="CHEBI:83062"/>
        <dbReference type="ChEBI" id="CHEBI:138284"/>
        <dbReference type="ChEBI" id="CHEBI:173118"/>
        <dbReference type="EC" id="4.6.1.19"/>
    </reaction>
</comment>
<comment type="subunit">
    <text evidence="8">Monomer.</text>
</comment>
<comment type="subcellular location">
    <subcellularLocation>
        <location evidence="1">Secreted</location>
        <location evidence="1">Extracellular space</location>
    </subcellularLocation>
</comment>
<comment type="similarity">
    <text evidence="8">Belongs to the RNase T2 family.</text>
</comment>
<proteinExistence type="evidence at protein level"/>
<protein>
    <recommendedName>
        <fullName>Ribonuclease S-F11</fullName>
        <ecNumber evidence="7">4.6.1.19</ecNumber>
    </recommendedName>
    <alternativeName>
        <fullName>SF11-RNase</fullName>
    </alternativeName>
    <alternativeName>
        <fullName>Stylar glycoprotein F11</fullName>
    </alternativeName>
</protein>
<reference evidence="9 10" key="1">
    <citation type="journal article" date="2001" name="J. Mol. Biol.">
        <title>The 1.55 A resolution structure of Nicotiana alata S(F11)-RNase associated with gametophytic self-incompatibility.</title>
        <authorList>
            <person name="Ida K."/>
            <person name="Norioka S."/>
            <person name="Yamamoto M."/>
            <person name="Kumasaka T."/>
            <person name="Yamashita E."/>
            <person name="Newbigin E."/>
            <person name="Clarke A.E."/>
            <person name="Sakiyama F."/>
            <person name="Sato M."/>
        </authorList>
    </citation>
    <scope>X-RAY CRYSTALLOGRAPHY (1.55 ANGSTROMS)</scope>
    <scope>SUBUNIT</scope>
    <scope>ACTIVE SITE</scope>
    <scope>GLYCOSYLATION AT ASN-28</scope>
    <scope>DISULFIDE BONDS</scope>
</reference>
<name>RNS11_NICAL</name>
<keyword id="KW-0002">3D-structure</keyword>
<keyword id="KW-1015">Disulfide bond</keyword>
<keyword id="KW-0255">Endonuclease</keyword>
<keyword id="KW-0325">Glycoprotein</keyword>
<keyword id="KW-0378">Hydrolase</keyword>
<keyword id="KW-0456">Lyase</keyword>
<keyword id="KW-0540">Nuclease</keyword>
<keyword id="KW-0964">Secreted</keyword>
<keyword id="KW-0732">Signal</keyword>
<evidence type="ECO:0000250" key="1"/>
<evidence type="ECO:0000250" key="2">
    <source>
        <dbReference type="UniProtKB" id="P04007"/>
    </source>
</evidence>
<evidence type="ECO:0000250" key="3">
    <source>
        <dbReference type="UniProtKB" id="P08056"/>
    </source>
</evidence>
<evidence type="ECO:0000250" key="4">
    <source>
        <dbReference type="UniProtKB" id="P23540"/>
    </source>
</evidence>
<evidence type="ECO:0000255" key="5"/>
<evidence type="ECO:0000255" key="6">
    <source>
        <dbReference type="PROSITE-ProRule" id="PRU00498"/>
    </source>
</evidence>
<evidence type="ECO:0000255" key="7">
    <source>
        <dbReference type="PROSITE-ProRule" id="PRU10045"/>
    </source>
</evidence>
<evidence type="ECO:0000269" key="8">
    <source>
    </source>
</evidence>
<evidence type="ECO:0000305" key="9"/>
<evidence type="ECO:0000312" key="10">
    <source>
        <dbReference type="PDB" id="1IOO"/>
    </source>
</evidence>
<evidence type="ECO:0007744" key="11">
    <source>
        <dbReference type="PDB" id="1IOO"/>
    </source>
</evidence>
<evidence type="ECO:0007829" key="12">
    <source>
        <dbReference type="PDB" id="1IOO"/>
    </source>
</evidence>
<sequence>DFEYLQLVLTWPASFCYANHCERIAPNNFTIHGLWPDNVKTRLHNCKPKPTYSYFTGKMLNDLDKHWMQLKFEQDYGRTEQPSWKYQYIKHGSCCQKRYNQNTYFGLALRLKDKFDLLRTLQTHRIIPGSSYTFQDIFDAIKTVSQENPDIKCAEVTKGTPELYEIGICFTPNADSMFRCPQSDTCDKTAKVLFRR</sequence>
<feature type="signal peptide" evidence="5">
    <location>
        <begin position="1"/>
        <end status="unknown"/>
    </location>
</feature>
<feature type="chain" id="PRO_0000235824" description="Ribonuclease S-F11">
    <location>
        <begin status="unknown"/>
        <end position="196"/>
    </location>
</feature>
<feature type="active site" description="Proton donor" evidence="7 8">
    <location>
        <position position="32"/>
    </location>
</feature>
<feature type="active site" evidence="3">
    <location>
        <position position="87"/>
    </location>
</feature>
<feature type="active site" description="Proton acceptor" evidence="7 8">
    <location>
        <position position="91"/>
    </location>
</feature>
<feature type="binding site" evidence="4">
    <location>
        <position position="32"/>
    </location>
    <ligand>
        <name>RNA</name>
        <dbReference type="ChEBI" id="CHEBI:33697"/>
    </ligand>
    <ligandPart>
        <name>a 3'-terminal ribonucleotide 3'-phosphate residue</name>
        <dbReference type="ChEBI" id="CHEBI:83062"/>
    </ligandPart>
</feature>
<feature type="binding site" evidence="4">
    <location>
        <begin position="69"/>
        <end position="70"/>
    </location>
    <ligand>
        <name>RNA</name>
        <dbReference type="ChEBI" id="CHEBI:33697"/>
    </ligand>
    <ligandPart>
        <name>a 3'-terminal ribonucleotide 3'-phosphate residue</name>
        <dbReference type="ChEBI" id="CHEBI:83062"/>
    </ligandPart>
</feature>
<feature type="binding site" evidence="4">
    <location>
        <begin position="90"/>
        <end position="91"/>
    </location>
    <ligand>
        <name>RNA</name>
        <dbReference type="ChEBI" id="CHEBI:33697"/>
    </ligand>
    <ligandPart>
        <name>a 3'-terminal ribonucleotide 3'-phosphate residue</name>
        <dbReference type="ChEBI" id="CHEBI:83062"/>
    </ligandPart>
</feature>
<feature type="glycosylation site" description="N-linked (GlcNAc...) asparagine" evidence="6 8 11">
    <location>
        <position position="28"/>
    </location>
</feature>
<feature type="disulfide bond" evidence="8 11">
    <location>
        <begin position="16"/>
        <end position="21"/>
    </location>
</feature>
<feature type="disulfide bond" evidence="8 11">
    <location>
        <begin position="46"/>
        <end position="94"/>
    </location>
</feature>
<feature type="disulfide bond" evidence="8 11">
    <location>
        <begin position="153"/>
        <end position="186"/>
    </location>
</feature>
<feature type="disulfide bond" evidence="8 11">
    <location>
        <begin position="169"/>
        <end position="180"/>
    </location>
</feature>
<feature type="strand" evidence="12">
    <location>
        <begin position="3"/>
        <end position="10"/>
    </location>
</feature>
<feature type="helix" evidence="12">
    <location>
        <begin position="12"/>
        <end position="18"/>
    </location>
</feature>
<feature type="strand" evidence="12">
    <location>
        <begin position="30"/>
        <end position="37"/>
    </location>
</feature>
<feature type="strand" evidence="12">
    <location>
        <begin position="39"/>
        <end position="41"/>
    </location>
</feature>
<feature type="helix" evidence="12">
    <location>
        <begin position="57"/>
        <end position="66"/>
    </location>
</feature>
<feature type="helix" evidence="12">
    <location>
        <begin position="74"/>
        <end position="80"/>
    </location>
</feature>
<feature type="helix" evidence="12">
    <location>
        <begin position="82"/>
        <end position="90"/>
    </location>
</feature>
<feature type="helix" evidence="12">
    <location>
        <begin position="92"/>
        <end position="94"/>
    </location>
</feature>
<feature type="turn" evidence="12">
    <location>
        <begin position="96"/>
        <end position="98"/>
    </location>
</feature>
<feature type="helix" evidence="12">
    <location>
        <begin position="101"/>
        <end position="113"/>
    </location>
</feature>
<feature type="helix" evidence="12">
    <location>
        <begin position="117"/>
        <end position="123"/>
    </location>
</feature>
<feature type="strand" evidence="12">
    <location>
        <begin position="130"/>
        <end position="132"/>
    </location>
</feature>
<feature type="helix" evidence="12">
    <location>
        <begin position="134"/>
        <end position="145"/>
    </location>
</feature>
<feature type="strand" evidence="12">
    <location>
        <begin position="150"/>
        <end position="154"/>
    </location>
</feature>
<feature type="strand" evidence="12">
    <location>
        <begin position="162"/>
        <end position="170"/>
    </location>
</feature>
<feature type="strand" evidence="12">
    <location>
        <begin position="174"/>
        <end position="178"/>
    </location>
</feature>
<feature type="strand" evidence="12">
    <location>
        <begin position="192"/>
        <end position="194"/>
    </location>
</feature>
<accession>Q7SID5</accession>
<dbReference type="EC" id="4.6.1.19" evidence="7"/>
<dbReference type="PDB" id="1IOO">
    <property type="method" value="X-ray"/>
    <property type="resolution" value="1.55 A"/>
    <property type="chains" value="A/B=1-196"/>
</dbReference>
<dbReference type="PDBsum" id="1IOO"/>
<dbReference type="SMR" id="Q7SID5"/>
<dbReference type="iPTMnet" id="Q7SID5"/>
<dbReference type="EvolutionaryTrace" id="Q7SID5"/>
<dbReference type="GO" id="GO:0005576">
    <property type="term" value="C:extracellular region"/>
    <property type="evidence" value="ECO:0007669"/>
    <property type="project" value="UniProtKB-SubCell"/>
</dbReference>
<dbReference type="GO" id="GO:0033897">
    <property type="term" value="F:ribonuclease T2 activity"/>
    <property type="evidence" value="ECO:0007669"/>
    <property type="project" value="UniProtKB-EC"/>
</dbReference>
<dbReference type="GO" id="GO:0003723">
    <property type="term" value="F:RNA binding"/>
    <property type="evidence" value="ECO:0007669"/>
    <property type="project" value="InterPro"/>
</dbReference>
<dbReference type="GO" id="GO:0006401">
    <property type="term" value="P:RNA catabolic process"/>
    <property type="evidence" value="ECO:0007669"/>
    <property type="project" value="TreeGrafter"/>
</dbReference>
<dbReference type="CDD" id="cd01061">
    <property type="entry name" value="RNase_T2_euk"/>
    <property type="match status" value="1"/>
</dbReference>
<dbReference type="Gene3D" id="3.90.730.10">
    <property type="entry name" value="Ribonuclease T2-like"/>
    <property type="match status" value="1"/>
</dbReference>
<dbReference type="InterPro" id="IPR033697">
    <property type="entry name" value="Ribonuclease_T2_eukaryotic"/>
</dbReference>
<dbReference type="InterPro" id="IPR001568">
    <property type="entry name" value="RNase_T2-like"/>
</dbReference>
<dbReference type="InterPro" id="IPR036430">
    <property type="entry name" value="RNase_T2-like_sf"/>
</dbReference>
<dbReference type="InterPro" id="IPR018188">
    <property type="entry name" value="RNase_T2_His_AS_1"/>
</dbReference>
<dbReference type="PANTHER" id="PTHR11240:SF81">
    <property type="entry name" value="RIBONUCLEASE S-2"/>
    <property type="match status" value="1"/>
</dbReference>
<dbReference type="PANTHER" id="PTHR11240">
    <property type="entry name" value="RIBONUCLEASE T2"/>
    <property type="match status" value="1"/>
</dbReference>
<dbReference type="Pfam" id="PF00445">
    <property type="entry name" value="Ribonuclease_T2"/>
    <property type="match status" value="1"/>
</dbReference>
<dbReference type="SUPFAM" id="SSF55895">
    <property type="entry name" value="Ribonuclease Rh-like"/>
    <property type="match status" value="1"/>
</dbReference>
<dbReference type="PROSITE" id="PS00530">
    <property type="entry name" value="RNASE_T2_1"/>
    <property type="match status" value="1"/>
</dbReference>
<organism>
    <name type="scientific">Nicotiana alata</name>
    <name type="common">Winged tobacco</name>
    <name type="synonym">Persian tobacco</name>
    <dbReference type="NCBI Taxonomy" id="4087"/>
    <lineage>
        <taxon>Eukaryota</taxon>
        <taxon>Viridiplantae</taxon>
        <taxon>Streptophyta</taxon>
        <taxon>Embryophyta</taxon>
        <taxon>Tracheophyta</taxon>
        <taxon>Spermatophyta</taxon>
        <taxon>Magnoliopsida</taxon>
        <taxon>eudicotyledons</taxon>
        <taxon>Gunneridae</taxon>
        <taxon>Pentapetalae</taxon>
        <taxon>asterids</taxon>
        <taxon>lamiids</taxon>
        <taxon>Solanales</taxon>
        <taxon>Solanaceae</taxon>
        <taxon>Nicotianoideae</taxon>
        <taxon>Nicotianeae</taxon>
        <taxon>Nicotiana</taxon>
    </lineage>
</organism>